<protein>
    <recommendedName>
        <fullName evidence="1">Protein Rev</fullName>
    </recommendedName>
    <alternativeName>
        <fullName evidence="1">ART/TRS</fullName>
    </alternativeName>
    <alternativeName>
        <fullName evidence="1">Anti-repression transactivator</fullName>
    </alternativeName>
    <alternativeName>
        <fullName evidence="1">Regulator of expression of viral proteins</fullName>
    </alternativeName>
</protein>
<sequence>MAGRSGDSDEELLKTVRLIKFLYQSNPPPNPEGTRQARRNRRRRWRERQRQIRKISGWILSTYLGRSAEPVPLQLPPLERLNLDCSEDCGTSGTQGVGSPEILVESPAVLEPGTKE</sequence>
<name>REV_HV1OY</name>
<organism>
    <name type="scientific">Human immunodeficiency virus type 1 group M subtype B (isolate OYI)</name>
    <name type="common">HIV-1</name>
    <dbReference type="NCBI Taxonomy" id="11699"/>
    <lineage>
        <taxon>Viruses</taxon>
        <taxon>Riboviria</taxon>
        <taxon>Pararnavirae</taxon>
        <taxon>Artverviricota</taxon>
        <taxon>Revtraviricetes</taxon>
        <taxon>Ortervirales</taxon>
        <taxon>Retroviridae</taxon>
        <taxon>Orthoretrovirinae</taxon>
        <taxon>Lentivirus</taxon>
        <taxon>Human immunodeficiency virus type 1</taxon>
    </lineage>
</organism>
<dbReference type="EMBL" id="M26727">
    <property type="protein sequence ID" value="AAA83396.1"/>
    <property type="molecule type" value="Genomic_RNA"/>
</dbReference>
<dbReference type="Proteomes" id="UP000121275">
    <property type="component" value="Genome"/>
</dbReference>
<dbReference type="GO" id="GO:0030430">
    <property type="term" value="C:host cell cytoplasm"/>
    <property type="evidence" value="ECO:0007669"/>
    <property type="project" value="UniProtKB-SubCell"/>
</dbReference>
<dbReference type="GO" id="GO:0044196">
    <property type="term" value="C:host cell nucleolus"/>
    <property type="evidence" value="ECO:0007669"/>
    <property type="project" value="UniProtKB-SubCell"/>
</dbReference>
<dbReference type="GO" id="GO:0003700">
    <property type="term" value="F:DNA-binding transcription factor activity"/>
    <property type="evidence" value="ECO:0007669"/>
    <property type="project" value="UniProtKB-UniRule"/>
</dbReference>
<dbReference type="GO" id="GO:0003723">
    <property type="term" value="F:RNA binding"/>
    <property type="evidence" value="ECO:0007669"/>
    <property type="project" value="UniProtKB-UniRule"/>
</dbReference>
<dbReference type="GO" id="GO:0051028">
    <property type="term" value="P:mRNA transport"/>
    <property type="evidence" value="ECO:0007669"/>
    <property type="project" value="UniProtKB-UniRule"/>
</dbReference>
<dbReference type="GO" id="GO:0016032">
    <property type="term" value="P:viral process"/>
    <property type="evidence" value="ECO:0007669"/>
    <property type="project" value="UniProtKB-UniRule"/>
</dbReference>
<dbReference type="Gene3D" id="6.10.140.630">
    <property type="match status" value="1"/>
</dbReference>
<dbReference type="HAMAP" id="MF_04077">
    <property type="entry name" value="REV_HIV1"/>
    <property type="match status" value="1"/>
</dbReference>
<dbReference type="InterPro" id="IPR000625">
    <property type="entry name" value="REV_protein"/>
</dbReference>
<dbReference type="Pfam" id="PF00424">
    <property type="entry name" value="REV"/>
    <property type="match status" value="1"/>
</dbReference>
<comment type="function">
    <text evidence="1">Escorts unspliced or incompletely spliced viral pre-mRNAs (late transcripts) out of the nucleus of infected cells. These pre-mRNAs carry a recognition sequence called Rev responsive element (RRE) located in the env gene, that is not present in fully spliced viral mRNAs (early transcripts). This function is essential since most viral proteins are translated from unspliced or partially spliced pre-mRNAs which cannot exit the nucleus by the pathway used by fully processed cellular mRNAs. Rev itself is translated from a fully spliced mRNA that readily exits the nucleus. Rev's nuclear localization signal (NLS) binds directly to KPNB1/Importin beta-1 without previous binding to KPNA1/Importin alpha-1. KPNB1 binds to the GDP bound form of RAN (Ran-GDP) and targets Rev to the nucleus. In the nucleus, the conversion from Ran-GDP to Ran-GTP dissociates Rev from KPNB1 and allows Rev's binding to the RRE in viral pre-mRNAs. Rev multimerization on the RRE via cooperative assembly exposes its nuclear export signal (NES) to the surface. Rev can then form a complex with XPO1/CRM1 and Ran-GTP, leading to nuclear export of the complex. Conversion from Ran-GTP to Ran-GDP mediates dissociation of the Rev/RRE/XPO1/RAN complex, so that Rev can return to the nucleus for a subsequent round of export. Beside KPNB1, also seems to interact with TNPO1/Transportin-1, RANBP5/IPO5 and IPO7/RANBP7 for nuclear import. The nucleoporin-like HRB/RIP is an essential cofactor that probably indirectly interacts with Rev to release HIV RNAs from the perinuclear region to the cytoplasm.</text>
</comment>
<comment type="subunit">
    <text evidence="1">Homomultimer; when bound to the RRE. Multimeric assembly is essential for activity and may involve XPO1. Binds to human KPNB1, XPO1, TNPO1, RANBP5 and IPO7. Interacts with the viral Integrase. Interacts with human KHDRBS1. Interacts with human NAP1; this interaction decreases Rev multimerization and stimulates its activity. Interacts with human DEAD-box helicases DDX3 and DDX24; these interactions may serve for viral RNA export to the cytoplasm and packaging, respectively. Interacts with human PSIP1; this interaction may inhibit HIV-1 DNA integration by promoting dissociation of the Integrase-LEDGF/p75 complex.</text>
</comment>
<comment type="subcellular location">
    <subcellularLocation>
        <location evidence="1">Host nucleus</location>
        <location evidence="1">Host nucleolus</location>
    </subcellularLocation>
    <subcellularLocation>
        <location evidence="1">Host cytoplasm</location>
    </subcellularLocation>
    <text evidence="1">The presence of both nuclear import and nuclear export signals leads to continuous shuttling between the nucleus and cytoplasm.</text>
</comment>
<comment type="domain">
    <text evidence="1">The RNA-binding motif binds to the RRE, a 240 bp stem-and-loop structure present in incompletely spliced viral pre-mRNAs. This region also contains the NLS which mediates nuclear localization via KPNB1 binding and, when the N-terminal sequence is present, nucleolar targeting. These overlapping functions prevent Rev bound to RRE from undesirable return to the nucleus. When Rev binds the RRE, the NLS becomes masked while the NES remains accessible. The leucine-rich NES mediates binding to human XPO1.</text>
</comment>
<comment type="PTM">
    <text evidence="1">Asymmetrically arginine dimethylated at one site by host PRMT6. Methylation impairs the RNA-binding activity and export of viral RNA from the nucleus to the cytoplasm.</text>
</comment>
<comment type="PTM">
    <text evidence="1">Phosphorylated by protein kinase CK2. Presence of, and maybe binding to the N-terminus of the regulatory beta subunit of CK2 is necessary for CK2-mediated Rev's phosphorylation.</text>
</comment>
<comment type="miscellaneous">
    <text>The OYI isolate was taken from the blood of a healthy Gabonese individual.</text>
</comment>
<comment type="miscellaneous">
    <text evidence="1">HIV-1 lineages are divided in three main groups, M (for Major), O (for Outlier), and N (for New, or Non-M, Non-O). The vast majority of strains found worldwide belong to the group M. Group O seems to be endemic to and largely confined to Cameroon and neighboring countries in West Central Africa, where these viruses represent a small minority of HIV-1 strains. The group N is represented by a limited number of isolates from Cameroonian persons. The group M is further subdivided in 9 clades or subtypes (A to D, F to H, J and K).</text>
</comment>
<comment type="similarity">
    <text evidence="1">Belongs to the HIV-1 REV protein family.</text>
</comment>
<keyword id="KW-0014">AIDS</keyword>
<keyword id="KW-1035">Host cytoplasm</keyword>
<keyword id="KW-1048">Host nucleus</keyword>
<keyword id="KW-0945">Host-virus interaction</keyword>
<keyword id="KW-0488">Methylation</keyword>
<keyword id="KW-0509">mRNA transport</keyword>
<keyword id="KW-0597">Phosphoprotein</keyword>
<keyword id="KW-0694">RNA-binding</keyword>
<keyword id="KW-0813">Transport</keyword>
<organismHost>
    <name type="scientific">Homo sapiens</name>
    <name type="common">Human</name>
    <dbReference type="NCBI Taxonomy" id="9606"/>
</organismHost>
<gene>
    <name evidence="1" type="primary">rev</name>
</gene>
<reference key="1">
    <citation type="journal article" date="1989" name="AIDS">
        <title>A highly defective HIV-1 strain isolated from a healthy Gabonese individual presenting an atypical western blot.</title>
        <authorList>
            <person name="Huet T."/>
            <person name="Dazza M.C."/>
            <person name="Brun-Vezinet F."/>
            <person name="Roelants G.E."/>
            <person name="Wain-Hobson S."/>
        </authorList>
    </citation>
    <scope>NUCLEOTIDE SEQUENCE [GENOMIC RNA]</scope>
</reference>
<reference key="2">
    <citation type="journal article" date="1999" name="Arch. Biochem. Biophys.">
        <title>The ins and outs of HIV Rev.</title>
        <authorList>
            <person name="Hope T.J."/>
        </authorList>
    </citation>
    <scope>REVIEW</scope>
</reference>
<feature type="chain" id="PRO_0000085273" description="Protein Rev">
    <location>
        <begin position="1"/>
        <end position="116"/>
    </location>
</feature>
<feature type="region of interest" description="Homomultimerization" evidence="1">
    <location>
        <begin position="18"/>
        <end position="26"/>
    </location>
</feature>
<feature type="region of interest" description="Disordered" evidence="2">
    <location>
        <begin position="23"/>
        <end position="48"/>
    </location>
</feature>
<feature type="region of interest" description="Disordered" evidence="2">
    <location>
        <begin position="90"/>
        <end position="116"/>
    </location>
</feature>
<feature type="short sequence motif" description="Nuclear localization signal and RNA-binding (RRE)" evidence="1">
    <location>
        <begin position="34"/>
        <end position="50"/>
    </location>
</feature>
<feature type="short sequence motif" description="Nuclear export signal and binding to XPO1" evidence="1">
    <location>
        <begin position="73"/>
        <end position="84"/>
    </location>
</feature>
<feature type="compositionally biased region" description="Basic residues" evidence="2">
    <location>
        <begin position="36"/>
        <end position="48"/>
    </location>
</feature>
<feature type="modified residue" description="Phosphoserine; by host CK2" evidence="1">
    <location>
        <position position="5"/>
    </location>
</feature>
<feature type="modified residue" description="Phosphoserine; by host CK2" evidence="1">
    <location>
        <position position="8"/>
    </location>
</feature>
<feature type="modified residue" description="Phosphoserine; by host" evidence="1">
    <location>
        <position position="92"/>
    </location>
</feature>
<feature type="modified residue" description="Phosphoserine; by host" evidence="1">
    <location>
        <position position="99"/>
    </location>
</feature>
<proteinExistence type="inferred from homology"/>
<accession>P20887</accession>
<evidence type="ECO:0000255" key="1">
    <source>
        <dbReference type="HAMAP-Rule" id="MF_04077"/>
    </source>
</evidence>
<evidence type="ECO:0000256" key="2">
    <source>
        <dbReference type="SAM" id="MobiDB-lite"/>
    </source>
</evidence>